<protein>
    <recommendedName>
        <fullName>Autophagy-related protein 17</fullName>
    </recommendedName>
</protein>
<sequence length="557" mass="60607">MSAVDSSTSSGHPEREAQHETGLPPLETLISHLVAAKRSLSAINHVWRANEIVTSARSALEESVVVSARTGFLRSGLNNQLRLLYNVRAEVEEISLRGRSEFANALKSLDAADARLKKTLGLLRETIVHASFRPEGEEPKSLHDFVDERGVEELHSTLKSSIDRTNAAQADLDASNNAFDVELQSIKQALSTYRATTKLASSRGSVSSSGSQSGSSSSLPSISSMPSMVHSLEMHAQEMANLLESLVRHFDLCVTAVKHTEGGGAAAQSITGDMPAGVMGSHPGPGHGAGTGPTIEGDFNANPNAPLDPLSASEYREMVSVIVNDAAEAEDVVMEIQDRIGEMESVLETLTAQRDSFAAIYNATKEVFSYLSSLASTRLPGYIAQAHAFTAVWNDEHDRIKGGLADLSDLNALYDGFLDAYDGLIIEVARRRHVRHRVEKILRDARNKLDALYEEDVNARETFRVEQGDYLPSDIWPGLSREPMRVEFHRISGGPLKGVLQSPDQAQSPQPNEGEQLGHQDPQNPGDADSRFGEVIPDLPQELVEQALARLKSKRQR</sequence>
<reference key="1">
    <citation type="journal article" date="2005" name="Nature">
        <title>Sequencing of Aspergillus nidulans and comparative analysis with A. fumigatus and A. oryzae.</title>
        <authorList>
            <person name="Galagan J.E."/>
            <person name="Calvo S.E."/>
            <person name="Cuomo C."/>
            <person name="Ma L.-J."/>
            <person name="Wortman J.R."/>
            <person name="Batzoglou S."/>
            <person name="Lee S.-I."/>
            <person name="Bastuerkmen M."/>
            <person name="Spevak C.C."/>
            <person name="Clutterbuck J."/>
            <person name="Kapitonov V."/>
            <person name="Jurka J."/>
            <person name="Scazzocchio C."/>
            <person name="Farman M.L."/>
            <person name="Butler J."/>
            <person name="Purcell S."/>
            <person name="Harris S."/>
            <person name="Braus G.H."/>
            <person name="Draht O."/>
            <person name="Busch S."/>
            <person name="D'Enfert C."/>
            <person name="Bouchier C."/>
            <person name="Goldman G.H."/>
            <person name="Bell-Pedersen D."/>
            <person name="Griffiths-Jones S."/>
            <person name="Doonan J.H."/>
            <person name="Yu J."/>
            <person name="Vienken K."/>
            <person name="Pain A."/>
            <person name="Freitag M."/>
            <person name="Selker E.U."/>
            <person name="Archer D.B."/>
            <person name="Penalva M.A."/>
            <person name="Oakley B.R."/>
            <person name="Momany M."/>
            <person name="Tanaka T."/>
            <person name="Kumagai T."/>
            <person name="Asai K."/>
            <person name="Machida M."/>
            <person name="Nierman W.C."/>
            <person name="Denning D.W."/>
            <person name="Caddick M.X."/>
            <person name="Hynes M."/>
            <person name="Paoletti M."/>
            <person name="Fischer R."/>
            <person name="Miller B.L."/>
            <person name="Dyer P.S."/>
            <person name="Sachs M.S."/>
            <person name="Osmani S.A."/>
            <person name="Birren B.W."/>
        </authorList>
    </citation>
    <scope>NUCLEOTIDE SEQUENCE [LARGE SCALE GENOMIC DNA]</scope>
    <source>
        <strain>FGSC A4 / ATCC 38163 / CBS 112.46 / NRRL 194 / M139</strain>
    </source>
</reference>
<reference key="2">
    <citation type="journal article" date="2009" name="Fungal Genet. Biol.">
        <title>The 2008 update of the Aspergillus nidulans genome annotation: a community effort.</title>
        <authorList>
            <person name="Wortman J.R."/>
            <person name="Gilsenan J.M."/>
            <person name="Joardar V."/>
            <person name="Deegan J."/>
            <person name="Clutterbuck J."/>
            <person name="Andersen M.R."/>
            <person name="Archer D."/>
            <person name="Bencina M."/>
            <person name="Braus G."/>
            <person name="Coutinho P."/>
            <person name="von Dohren H."/>
            <person name="Doonan J."/>
            <person name="Driessen A.J."/>
            <person name="Durek P."/>
            <person name="Espeso E."/>
            <person name="Fekete E."/>
            <person name="Flipphi M."/>
            <person name="Estrada C.G."/>
            <person name="Geysens S."/>
            <person name="Goldman G."/>
            <person name="de Groot P.W."/>
            <person name="Hansen K."/>
            <person name="Harris S.D."/>
            <person name="Heinekamp T."/>
            <person name="Helmstaedt K."/>
            <person name="Henrissat B."/>
            <person name="Hofmann G."/>
            <person name="Homan T."/>
            <person name="Horio T."/>
            <person name="Horiuchi H."/>
            <person name="James S."/>
            <person name="Jones M."/>
            <person name="Karaffa L."/>
            <person name="Karanyi Z."/>
            <person name="Kato M."/>
            <person name="Keller N."/>
            <person name="Kelly D.E."/>
            <person name="Kiel J.A."/>
            <person name="Kim J.M."/>
            <person name="van der Klei I.J."/>
            <person name="Klis F.M."/>
            <person name="Kovalchuk A."/>
            <person name="Krasevec N."/>
            <person name="Kubicek C.P."/>
            <person name="Liu B."/>
            <person name="Maccabe A."/>
            <person name="Meyer V."/>
            <person name="Mirabito P."/>
            <person name="Miskei M."/>
            <person name="Mos M."/>
            <person name="Mullins J."/>
            <person name="Nelson D.R."/>
            <person name="Nielsen J."/>
            <person name="Oakley B.R."/>
            <person name="Osmani S.A."/>
            <person name="Pakula T."/>
            <person name="Paszewski A."/>
            <person name="Paulsen I."/>
            <person name="Pilsyk S."/>
            <person name="Pocsi I."/>
            <person name="Punt P.J."/>
            <person name="Ram A.F."/>
            <person name="Ren Q."/>
            <person name="Robellet X."/>
            <person name="Robson G."/>
            <person name="Seiboth B."/>
            <person name="van Solingen P."/>
            <person name="Specht T."/>
            <person name="Sun J."/>
            <person name="Taheri-Talesh N."/>
            <person name="Takeshita N."/>
            <person name="Ussery D."/>
            <person name="vanKuyk P.A."/>
            <person name="Visser H."/>
            <person name="van de Vondervoort P.J."/>
            <person name="de Vries R.P."/>
            <person name="Walton J."/>
            <person name="Xiang X."/>
            <person name="Xiong Y."/>
            <person name="Zeng A.P."/>
            <person name="Brandt B.W."/>
            <person name="Cornell M.J."/>
            <person name="van den Hondel C.A."/>
            <person name="Visser J."/>
            <person name="Oliver S.G."/>
            <person name="Turner G."/>
        </authorList>
    </citation>
    <scope>GENOME REANNOTATION</scope>
    <source>
        <strain>FGSC A4 / ATCC 38163 / CBS 112.46 / NRRL 194 / M139</strain>
    </source>
</reference>
<proteinExistence type="inferred from homology"/>
<keyword id="KW-0072">Autophagy</keyword>
<keyword id="KW-0963">Cytoplasm</keyword>
<keyword id="KW-0472">Membrane</keyword>
<keyword id="KW-1185">Reference proteome</keyword>
<accession>Q5AZC0</accession>
<accession>C8V0X9</accession>
<gene>
    <name type="primary">atg17</name>
    <name type="ORF">AN6360</name>
</gene>
<organism>
    <name type="scientific">Emericella nidulans (strain FGSC A4 / ATCC 38163 / CBS 112.46 / NRRL 194 / M139)</name>
    <name type="common">Aspergillus nidulans</name>
    <dbReference type="NCBI Taxonomy" id="227321"/>
    <lineage>
        <taxon>Eukaryota</taxon>
        <taxon>Fungi</taxon>
        <taxon>Dikarya</taxon>
        <taxon>Ascomycota</taxon>
        <taxon>Pezizomycotina</taxon>
        <taxon>Eurotiomycetes</taxon>
        <taxon>Eurotiomycetidae</taxon>
        <taxon>Eurotiales</taxon>
        <taxon>Aspergillaceae</taxon>
        <taxon>Aspergillus</taxon>
        <taxon>Aspergillus subgen. Nidulantes</taxon>
    </lineage>
</organism>
<feature type="chain" id="PRO_0000124560" description="Autophagy-related protein 17">
    <location>
        <begin position="1"/>
        <end position="557"/>
    </location>
</feature>
<feature type="region of interest" description="Disordered" evidence="2">
    <location>
        <begin position="1"/>
        <end position="23"/>
    </location>
</feature>
<feature type="region of interest" description="Disordered" evidence="2">
    <location>
        <begin position="200"/>
        <end position="224"/>
    </location>
</feature>
<feature type="region of interest" description="Disordered" evidence="2">
    <location>
        <begin position="496"/>
        <end position="539"/>
    </location>
</feature>
<feature type="compositionally biased region" description="Polar residues" evidence="2">
    <location>
        <begin position="1"/>
        <end position="11"/>
    </location>
</feature>
<feature type="compositionally biased region" description="Low complexity" evidence="2">
    <location>
        <begin position="201"/>
        <end position="224"/>
    </location>
</feature>
<feature type="compositionally biased region" description="Polar residues" evidence="2">
    <location>
        <begin position="502"/>
        <end position="513"/>
    </location>
</feature>
<evidence type="ECO:0000250" key="1"/>
<evidence type="ECO:0000256" key="2">
    <source>
        <dbReference type="SAM" id="MobiDB-lite"/>
    </source>
</evidence>
<evidence type="ECO:0000305" key="3"/>
<dbReference type="EMBL" id="AACD01000107">
    <property type="protein sequence ID" value="EAA58744.1"/>
    <property type="status" value="ALT_SEQ"/>
    <property type="molecule type" value="Genomic_DNA"/>
</dbReference>
<dbReference type="EMBL" id="BN001301">
    <property type="protein sequence ID" value="CBF69627.1"/>
    <property type="molecule type" value="Genomic_DNA"/>
</dbReference>
<dbReference type="RefSeq" id="XP_663964.1">
    <property type="nucleotide sequence ID" value="XM_658872.1"/>
</dbReference>
<dbReference type="SMR" id="Q5AZC0"/>
<dbReference type="STRING" id="227321.Q5AZC0"/>
<dbReference type="EnsemblFungi" id="CBF69627">
    <property type="protein sequence ID" value="CBF69627"/>
    <property type="gene ID" value="ANIA_06360"/>
</dbReference>
<dbReference type="VEuPathDB" id="FungiDB:AN6360"/>
<dbReference type="eggNOG" id="ENOG502RYHP">
    <property type="taxonomic scope" value="Eukaryota"/>
</dbReference>
<dbReference type="HOGENOM" id="CLU_028356_0_0_1"/>
<dbReference type="InParanoid" id="Q5AZC0"/>
<dbReference type="OMA" id="THVWRAN"/>
<dbReference type="OrthoDB" id="1937984at2759"/>
<dbReference type="Proteomes" id="UP000000560">
    <property type="component" value="Chromosome I"/>
</dbReference>
<dbReference type="GO" id="GO:1990316">
    <property type="term" value="C:Atg1/ULK1 kinase complex"/>
    <property type="evidence" value="ECO:0000318"/>
    <property type="project" value="GO_Central"/>
</dbReference>
<dbReference type="GO" id="GO:0000407">
    <property type="term" value="C:phagophore assembly site"/>
    <property type="evidence" value="ECO:0000318"/>
    <property type="project" value="GO_Central"/>
</dbReference>
<dbReference type="GO" id="GO:0034045">
    <property type="term" value="C:phagophore assembly site membrane"/>
    <property type="evidence" value="ECO:0007669"/>
    <property type="project" value="UniProtKB-SubCell"/>
</dbReference>
<dbReference type="GO" id="GO:0060090">
    <property type="term" value="F:molecular adaptor activity"/>
    <property type="evidence" value="ECO:0000318"/>
    <property type="project" value="GO_Central"/>
</dbReference>
<dbReference type="GO" id="GO:0030295">
    <property type="term" value="F:protein kinase activator activity"/>
    <property type="evidence" value="ECO:0000318"/>
    <property type="project" value="GO_Central"/>
</dbReference>
<dbReference type="GO" id="GO:0000045">
    <property type="term" value="P:autophagosome assembly"/>
    <property type="evidence" value="ECO:0000318"/>
    <property type="project" value="GO_Central"/>
</dbReference>
<dbReference type="GO" id="GO:0000423">
    <property type="term" value="P:mitophagy"/>
    <property type="evidence" value="ECO:0000318"/>
    <property type="project" value="GO_Central"/>
</dbReference>
<dbReference type="GO" id="GO:0000425">
    <property type="term" value="P:pexophagy"/>
    <property type="evidence" value="ECO:0000318"/>
    <property type="project" value="GO_Central"/>
</dbReference>
<dbReference type="GO" id="GO:0034727">
    <property type="term" value="P:piecemeal microautophagy of the nucleus"/>
    <property type="evidence" value="ECO:0000318"/>
    <property type="project" value="GO_Central"/>
</dbReference>
<dbReference type="InterPro" id="IPR007240">
    <property type="entry name" value="Atg17"/>
</dbReference>
<dbReference type="InterPro" id="IPR045326">
    <property type="entry name" value="ATG17-like_dom"/>
</dbReference>
<dbReference type="PANTHER" id="PTHR28005">
    <property type="entry name" value="AUTOPHAGY-RELATED PROTEIN 17"/>
    <property type="match status" value="1"/>
</dbReference>
<dbReference type="PANTHER" id="PTHR28005:SF1">
    <property type="entry name" value="AUTOPHAGY-RELATED PROTEIN 17"/>
    <property type="match status" value="1"/>
</dbReference>
<dbReference type="Pfam" id="PF04108">
    <property type="entry name" value="ATG17_like"/>
    <property type="match status" value="1"/>
</dbReference>
<comment type="function">
    <text evidence="1">Autophagy-specific protein that functions in response to autophagy-inducing signals as a scaffold to recruit other ATG proteins to organize pre-autophagosomal structure (PAS) formation. Modulates the timing and magnitude of the autophagy response, such as the size of the sequestering vesicles. Plays particularly a role in pexophagy and nucleophagy (By similarity).</text>
</comment>
<comment type="subcellular location">
    <subcellularLocation>
        <location evidence="1">Cytoplasm</location>
    </subcellularLocation>
    <subcellularLocation>
        <location evidence="1">Preautophagosomal structure membrane</location>
        <topology evidence="1">Peripheral membrane protein</topology>
    </subcellularLocation>
</comment>
<comment type="similarity">
    <text evidence="3">Belongs to the ATG17 family.</text>
</comment>
<comment type="sequence caution" evidence="3">
    <conflict type="erroneous gene model prediction">
        <sequence resource="EMBL-CDS" id="EAA58744"/>
    </conflict>
</comment>
<name>ATG17_EMENI</name>